<accession>P06589</accession>
<evidence type="ECO:0000250" key="1"/>
<evidence type="ECO:0000305" key="2"/>
<organism>
    <name type="scientific">Zea mays</name>
    <name type="common">Maize</name>
    <dbReference type="NCBI Taxonomy" id="4577"/>
    <lineage>
        <taxon>Eukaryota</taxon>
        <taxon>Viridiplantae</taxon>
        <taxon>Streptophyta</taxon>
        <taxon>Embryophyta</taxon>
        <taxon>Tracheophyta</taxon>
        <taxon>Spermatophyta</taxon>
        <taxon>Magnoliopsida</taxon>
        <taxon>Liliopsida</taxon>
        <taxon>Poales</taxon>
        <taxon>Poaceae</taxon>
        <taxon>PACMAD clade</taxon>
        <taxon>Panicoideae</taxon>
        <taxon>Andropogonodae</taxon>
        <taxon>Andropogoneae</taxon>
        <taxon>Tripsacinae</taxon>
        <taxon>Zea</taxon>
    </lineage>
</organism>
<name>RK22_MAIZE</name>
<keyword id="KW-0150">Chloroplast</keyword>
<keyword id="KW-0934">Plastid</keyword>
<keyword id="KW-1185">Reference proteome</keyword>
<keyword id="KW-0687">Ribonucleoprotein</keyword>
<keyword id="KW-0689">Ribosomal protein</keyword>
<keyword id="KW-0694">RNA-binding</keyword>
<keyword id="KW-0699">rRNA-binding</keyword>
<comment type="function">
    <text evidence="1">This protein binds specifically to 23S rRNA.</text>
</comment>
<comment type="function">
    <text evidence="1">The globular domain of the protein is located near the polypeptide exit tunnel on the outside of the subunit, while an extended beta-hairpin is found that lines the wall of the exit tunnel in the center of the 70S ribosome.</text>
</comment>
<comment type="subunit">
    <text evidence="1">Part of the 50S ribosomal subunit.</text>
</comment>
<comment type="subcellular location">
    <subcellularLocation>
        <location>Plastid</location>
        <location>Chloroplast</location>
    </subcellularLocation>
</comment>
<comment type="similarity">
    <text evidence="2">Belongs to the universal ribosomal protein uL22 family.</text>
</comment>
<comment type="sequence caution" evidence="2">
    <conflict type="miscellaneous discrepancy">
        <sequence resource="EMBL-CDS" id="CAA68422"/>
    </conflict>
    <text>Sequencing errors.</text>
</comment>
<feature type="chain" id="PRO_0000125308" description="Large ribosomal subunit protein uL22c">
    <location>
        <begin position="1"/>
        <end position="148"/>
    </location>
</feature>
<dbReference type="EMBL" id="Y00329">
    <property type="protein sequence ID" value="CAA68422.1"/>
    <property type="status" value="ALT_SEQ"/>
    <property type="molecule type" value="Genomic_DNA"/>
</dbReference>
<dbReference type="EMBL" id="X86563">
    <property type="protein sequence ID" value="CAA60325.1"/>
    <property type="molecule type" value="Genomic_DNA"/>
</dbReference>
<dbReference type="PIR" id="S58591">
    <property type="entry name" value="S58591"/>
</dbReference>
<dbReference type="RefSeq" id="NP_043063.1">
    <property type="nucleotide sequence ID" value="NC_001666.2"/>
</dbReference>
<dbReference type="SMR" id="P06589"/>
<dbReference type="FunCoup" id="P06589">
    <property type="interactions" value="313"/>
</dbReference>
<dbReference type="STRING" id="4577.P06589"/>
<dbReference type="PaxDb" id="4577-GRMZM2G015024_P01"/>
<dbReference type="EnsemblPlants" id="Zm00001eb437150_T001">
    <property type="protein sequence ID" value="Zm00001eb437150_P001"/>
    <property type="gene ID" value="Zm00001eb437150"/>
</dbReference>
<dbReference type="GeneID" id="845218"/>
<dbReference type="Gramene" id="Zm00001eb437150_T001">
    <property type="protein sequence ID" value="Zm00001eb437150_P001"/>
    <property type="gene ID" value="Zm00001eb437150"/>
</dbReference>
<dbReference type="KEGG" id="zma:845218"/>
<dbReference type="MaizeGDB" id="66429"/>
<dbReference type="eggNOG" id="KOG1711">
    <property type="taxonomic scope" value="Eukaryota"/>
</dbReference>
<dbReference type="InParanoid" id="P06589"/>
<dbReference type="OrthoDB" id="1840754at2759"/>
<dbReference type="Proteomes" id="UP000007305">
    <property type="component" value="Chloroplast"/>
</dbReference>
<dbReference type="ExpressionAtlas" id="P06589">
    <property type="expression patterns" value="baseline and differential"/>
</dbReference>
<dbReference type="GO" id="GO:0009507">
    <property type="term" value="C:chloroplast"/>
    <property type="evidence" value="ECO:0007669"/>
    <property type="project" value="UniProtKB-SubCell"/>
</dbReference>
<dbReference type="GO" id="GO:0015934">
    <property type="term" value="C:large ribosomal subunit"/>
    <property type="evidence" value="ECO:0000318"/>
    <property type="project" value="GO_Central"/>
</dbReference>
<dbReference type="GO" id="GO:0019843">
    <property type="term" value="F:rRNA binding"/>
    <property type="evidence" value="ECO:0007669"/>
    <property type="project" value="UniProtKB-UniRule"/>
</dbReference>
<dbReference type="GO" id="GO:0003735">
    <property type="term" value="F:structural constituent of ribosome"/>
    <property type="evidence" value="ECO:0000318"/>
    <property type="project" value="GO_Central"/>
</dbReference>
<dbReference type="GO" id="GO:0006412">
    <property type="term" value="P:translation"/>
    <property type="evidence" value="ECO:0000318"/>
    <property type="project" value="GO_Central"/>
</dbReference>
<dbReference type="CDD" id="cd00336">
    <property type="entry name" value="Ribosomal_L22"/>
    <property type="match status" value="1"/>
</dbReference>
<dbReference type="FunFam" id="3.90.470.10:FF:000004">
    <property type="entry name" value="50S ribosomal protein L22, chloroplastic"/>
    <property type="match status" value="1"/>
</dbReference>
<dbReference type="Gene3D" id="3.90.470.10">
    <property type="entry name" value="Ribosomal protein L22/L17"/>
    <property type="match status" value="1"/>
</dbReference>
<dbReference type="HAMAP" id="MF_01331_B">
    <property type="entry name" value="Ribosomal_uL22_B"/>
    <property type="match status" value="1"/>
</dbReference>
<dbReference type="InterPro" id="IPR001063">
    <property type="entry name" value="Ribosomal_uL22"/>
</dbReference>
<dbReference type="InterPro" id="IPR005727">
    <property type="entry name" value="Ribosomal_uL22_bac/chlpt-type"/>
</dbReference>
<dbReference type="InterPro" id="IPR047867">
    <property type="entry name" value="Ribosomal_uL22_bac/org-type"/>
</dbReference>
<dbReference type="InterPro" id="IPR018260">
    <property type="entry name" value="Ribosomal_uL22_CS"/>
</dbReference>
<dbReference type="InterPro" id="IPR036394">
    <property type="entry name" value="Ribosomal_uL22_sf"/>
</dbReference>
<dbReference type="NCBIfam" id="TIGR01044">
    <property type="entry name" value="rplV_bact"/>
    <property type="match status" value="1"/>
</dbReference>
<dbReference type="PANTHER" id="PTHR13501">
    <property type="entry name" value="CHLOROPLAST 50S RIBOSOMAL PROTEIN L22-RELATED"/>
    <property type="match status" value="1"/>
</dbReference>
<dbReference type="PANTHER" id="PTHR13501:SF10">
    <property type="entry name" value="LARGE RIBOSOMAL SUBUNIT PROTEIN UL22M"/>
    <property type="match status" value="1"/>
</dbReference>
<dbReference type="Pfam" id="PF00237">
    <property type="entry name" value="Ribosomal_L22"/>
    <property type="match status" value="1"/>
</dbReference>
<dbReference type="SUPFAM" id="SSF54843">
    <property type="entry name" value="Ribosomal protein L22"/>
    <property type="match status" value="1"/>
</dbReference>
<dbReference type="PROSITE" id="PS00464">
    <property type="entry name" value="RIBOSOMAL_L22"/>
    <property type="match status" value="1"/>
</dbReference>
<geneLocation type="chloroplast"/>
<protein>
    <recommendedName>
        <fullName evidence="2">Large ribosomal subunit protein uL22c</fullName>
    </recommendedName>
    <alternativeName>
        <fullName>50S ribosomal protein L22, chloroplastic</fullName>
    </alternativeName>
</protein>
<proteinExistence type="inferred from homology"/>
<reference key="1">
    <citation type="journal article" date="1987" name="Nucleic Acids Res.">
        <title>The sequence of the maize plastid encoded rpl 22 locus.</title>
        <authorList>
            <person name="McLaughlin W.E."/>
            <person name="Larrinua I.M."/>
        </authorList>
    </citation>
    <scope>NUCLEOTIDE SEQUENCE [LARGE SCALE GENOMIC DNA]</scope>
    <source>
        <strain>cv. B73</strain>
    </source>
</reference>
<reference key="2">
    <citation type="journal article" date="1991" name="EMBO J.">
        <title>Transfer of rpl22 to the nucleus greatly preceded its loss from the chloroplast and involved the gain of an intron.</title>
        <authorList>
            <person name="Gantt J.S."/>
            <person name="Baldauf S.L."/>
            <person name="Calie P.J."/>
            <person name="Weeden N.F."/>
            <person name="Palmer J.D."/>
        </authorList>
    </citation>
    <scope>SEQUENCE REVISION</scope>
</reference>
<reference key="3">
    <citation type="journal article" date="1995" name="J. Mol. Biol.">
        <title>Complete sequence of the maize chloroplast genome: gene content, hotspots of divergence and fine tuning of genetic information by transcript editing.</title>
        <authorList>
            <person name="Maier R.M."/>
            <person name="Neckermann K."/>
            <person name="Igloi G.L."/>
            <person name="Koessel H."/>
        </authorList>
    </citation>
    <scope>NUCLEOTIDE SEQUENCE [LARGE SCALE GENOMIC DNA]</scope>
    <source>
        <strain>cv. B73</strain>
    </source>
</reference>
<sequence>MTSFKLVKYTPRIKKKKGLRKLARKVPTDRLLKFERVFKAQKRIHMSVFKAQRVLDEIRWRYYEETVMILNLMPYRASYPILKLVYSAAANATHYRDFDKTNLFITKAEVSRSTIMKKFRPRARGRSYSIKKTMCNITIVLNIVKKSK</sequence>
<gene>
    <name type="primary">rpl22</name>
</gene>